<accession>A0RQ49</accession>
<proteinExistence type="inferred from homology"/>
<feature type="chain" id="PRO_0000305805" description="Bifunctional protein FolD">
    <location>
        <begin position="1"/>
        <end position="283"/>
    </location>
</feature>
<feature type="binding site" evidence="1">
    <location>
        <begin position="163"/>
        <end position="165"/>
    </location>
    <ligand>
        <name>NADP(+)</name>
        <dbReference type="ChEBI" id="CHEBI:58349"/>
    </ligand>
</feature>
<feature type="binding site" evidence="1">
    <location>
        <position position="188"/>
    </location>
    <ligand>
        <name>NADP(+)</name>
        <dbReference type="ChEBI" id="CHEBI:58349"/>
    </ligand>
</feature>
<feature type="binding site" evidence="1">
    <location>
        <position position="229"/>
    </location>
    <ligand>
        <name>NADP(+)</name>
        <dbReference type="ChEBI" id="CHEBI:58349"/>
    </ligand>
</feature>
<gene>
    <name evidence="1" type="primary">folD</name>
    <name type="ordered locus">CFF8240_1174</name>
</gene>
<dbReference type="EC" id="1.5.1.5" evidence="1"/>
<dbReference type="EC" id="3.5.4.9" evidence="1"/>
<dbReference type="EMBL" id="CP000487">
    <property type="protein sequence ID" value="ABK82688.1"/>
    <property type="molecule type" value="Genomic_DNA"/>
</dbReference>
<dbReference type="RefSeq" id="WP_010402657.1">
    <property type="nucleotide sequence ID" value="NC_008599.1"/>
</dbReference>
<dbReference type="SMR" id="A0RQ49"/>
<dbReference type="GeneID" id="61064999"/>
<dbReference type="KEGG" id="cff:CFF8240_1174"/>
<dbReference type="eggNOG" id="COG0190">
    <property type="taxonomic scope" value="Bacteria"/>
</dbReference>
<dbReference type="HOGENOM" id="CLU_034045_2_1_7"/>
<dbReference type="UniPathway" id="UPA00193"/>
<dbReference type="Proteomes" id="UP000000760">
    <property type="component" value="Chromosome"/>
</dbReference>
<dbReference type="GO" id="GO:0005829">
    <property type="term" value="C:cytosol"/>
    <property type="evidence" value="ECO:0007669"/>
    <property type="project" value="TreeGrafter"/>
</dbReference>
<dbReference type="GO" id="GO:0004477">
    <property type="term" value="F:methenyltetrahydrofolate cyclohydrolase activity"/>
    <property type="evidence" value="ECO:0007669"/>
    <property type="project" value="UniProtKB-UniRule"/>
</dbReference>
<dbReference type="GO" id="GO:0004488">
    <property type="term" value="F:methylenetetrahydrofolate dehydrogenase (NADP+) activity"/>
    <property type="evidence" value="ECO:0007669"/>
    <property type="project" value="UniProtKB-UniRule"/>
</dbReference>
<dbReference type="GO" id="GO:0000105">
    <property type="term" value="P:L-histidine biosynthetic process"/>
    <property type="evidence" value="ECO:0007669"/>
    <property type="project" value="UniProtKB-KW"/>
</dbReference>
<dbReference type="GO" id="GO:0009086">
    <property type="term" value="P:methionine biosynthetic process"/>
    <property type="evidence" value="ECO:0007669"/>
    <property type="project" value="UniProtKB-KW"/>
</dbReference>
<dbReference type="GO" id="GO:0006164">
    <property type="term" value="P:purine nucleotide biosynthetic process"/>
    <property type="evidence" value="ECO:0007669"/>
    <property type="project" value="UniProtKB-KW"/>
</dbReference>
<dbReference type="GO" id="GO:0035999">
    <property type="term" value="P:tetrahydrofolate interconversion"/>
    <property type="evidence" value="ECO:0007669"/>
    <property type="project" value="UniProtKB-UniRule"/>
</dbReference>
<dbReference type="CDD" id="cd01080">
    <property type="entry name" value="NAD_bind_m-THF_DH_Cyclohyd"/>
    <property type="match status" value="1"/>
</dbReference>
<dbReference type="FunFam" id="3.40.50.720:FF:000094">
    <property type="entry name" value="Bifunctional protein FolD"/>
    <property type="match status" value="1"/>
</dbReference>
<dbReference type="FunFam" id="3.40.50.10860:FF:000005">
    <property type="entry name" value="C-1-tetrahydrofolate synthase, cytoplasmic, putative"/>
    <property type="match status" value="1"/>
</dbReference>
<dbReference type="Gene3D" id="3.40.50.10860">
    <property type="entry name" value="Leucine Dehydrogenase, chain A, domain 1"/>
    <property type="match status" value="1"/>
</dbReference>
<dbReference type="Gene3D" id="3.40.50.720">
    <property type="entry name" value="NAD(P)-binding Rossmann-like Domain"/>
    <property type="match status" value="1"/>
</dbReference>
<dbReference type="HAMAP" id="MF_01576">
    <property type="entry name" value="THF_DHG_CYH"/>
    <property type="match status" value="1"/>
</dbReference>
<dbReference type="InterPro" id="IPR046346">
    <property type="entry name" value="Aminoacid_DH-like_N_sf"/>
</dbReference>
<dbReference type="InterPro" id="IPR036291">
    <property type="entry name" value="NAD(P)-bd_dom_sf"/>
</dbReference>
<dbReference type="InterPro" id="IPR000672">
    <property type="entry name" value="THF_DH/CycHdrlase"/>
</dbReference>
<dbReference type="InterPro" id="IPR020630">
    <property type="entry name" value="THF_DH/CycHdrlase_cat_dom"/>
</dbReference>
<dbReference type="InterPro" id="IPR020867">
    <property type="entry name" value="THF_DH/CycHdrlase_CS"/>
</dbReference>
<dbReference type="InterPro" id="IPR020631">
    <property type="entry name" value="THF_DH/CycHdrlase_NAD-bd_dom"/>
</dbReference>
<dbReference type="NCBIfam" id="NF008058">
    <property type="entry name" value="PRK10792.1"/>
    <property type="match status" value="1"/>
</dbReference>
<dbReference type="NCBIfam" id="NF010783">
    <property type="entry name" value="PRK14186.1"/>
    <property type="match status" value="1"/>
</dbReference>
<dbReference type="NCBIfam" id="NF010787">
    <property type="entry name" value="PRK14191.1"/>
    <property type="match status" value="1"/>
</dbReference>
<dbReference type="PANTHER" id="PTHR48099:SF5">
    <property type="entry name" value="C-1-TETRAHYDROFOLATE SYNTHASE, CYTOPLASMIC"/>
    <property type="match status" value="1"/>
</dbReference>
<dbReference type="PANTHER" id="PTHR48099">
    <property type="entry name" value="C-1-TETRAHYDROFOLATE SYNTHASE, CYTOPLASMIC-RELATED"/>
    <property type="match status" value="1"/>
</dbReference>
<dbReference type="Pfam" id="PF00763">
    <property type="entry name" value="THF_DHG_CYH"/>
    <property type="match status" value="1"/>
</dbReference>
<dbReference type="Pfam" id="PF02882">
    <property type="entry name" value="THF_DHG_CYH_C"/>
    <property type="match status" value="1"/>
</dbReference>
<dbReference type="PRINTS" id="PR00085">
    <property type="entry name" value="THFDHDRGNASE"/>
</dbReference>
<dbReference type="SUPFAM" id="SSF53223">
    <property type="entry name" value="Aminoacid dehydrogenase-like, N-terminal domain"/>
    <property type="match status" value="1"/>
</dbReference>
<dbReference type="SUPFAM" id="SSF51735">
    <property type="entry name" value="NAD(P)-binding Rossmann-fold domains"/>
    <property type="match status" value="1"/>
</dbReference>
<dbReference type="PROSITE" id="PS00766">
    <property type="entry name" value="THF_DHG_CYH_1"/>
    <property type="match status" value="1"/>
</dbReference>
<dbReference type="PROSITE" id="PS00767">
    <property type="entry name" value="THF_DHG_CYH_2"/>
    <property type="match status" value="1"/>
</dbReference>
<keyword id="KW-0028">Amino-acid biosynthesis</keyword>
<keyword id="KW-0368">Histidine biosynthesis</keyword>
<keyword id="KW-0378">Hydrolase</keyword>
<keyword id="KW-0486">Methionine biosynthesis</keyword>
<keyword id="KW-0511">Multifunctional enzyme</keyword>
<keyword id="KW-0521">NADP</keyword>
<keyword id="KW-0554">One-carbon metabolism</keyword>
<keyword id="KW-0560">Oxidoreductase</keyword>
<keyword id="KW-0658">Purine biosynthesis</keyword>
<protein>
    <recommendedName>
        <fullName evidence="1">Bifunctional protein FolD</fullName>
    </recommendedName>
    <domain>
        <recommendedName>
            <fullName evidence="1">Methylenetetrahydrofolate dehydrogenase</fullName>
            <ecNumber evidence="1">1.5.1.5</ecNumber>
        </recommendedName>
    </domain>
    <domain>
        <recommendedName>
            <fullName evidence="1">Methenyltetrahydrofolate cyclohydrolase</fullName>
            <ecNumber evidence="1">3.5.4.9</ecNumber>
        </recommendedName>
    </domain>
</protein>
<name>FOLD_CAMFF</name>
<reference key="1">
    <citation type="submission" date="2006-11" db="EMBL/GenBank/DDBJ databases">
        <title>Sequence of Campylobacter fetus subsp. fetus 82-40.</title>
        <authorList>
            <person name="Fouts D.E."/>
            <person name="Nelson K.E."/>
        </authorList>
    </citation>
    <scope>NUCLEOTIDE SEQUENCE [LARGE SCALE GENOMIC DNA]</scope>
    <source>
        <strain>82-40</strain>
    </source>
</reference>
<comment type="function">
    <text evidence="1">Catalyzes the oxidation of 5,10-methylenetetrahydrofolate to 5,10-methenyltetrahydrofolate and then the hydrolysis of 5,10-methenyltetrahydrofolate to 10-formyltetrahydrofolate.</text>
</comment>
<comment type="catalytic activity">
    <reaction evidence="1">
        <text>(6R)-5,10-methylene-5,6,7,8-tetrahydrofolate + NADP(+) = (6R)-5,10-methenyltetrahydrofolate + NADPH</text>
        <dbReference type="Rhea" id="RHEA:22812"/>
        <dbReference type="ChEBI" id="CHEBI:15636"/>
        <dbReference type="ChEBI" id="CHEBI:57455"/>
        <dbReference type="ChEBI" id="CHEBI:57783"/>
        <dbReference type="ChEBI" id="CHEBI:58349"/>
        <dbReference type="EC" id="1.5.1.5"/>
    </reaction>
</comment>
<comment type="catalytic activity">
    <reaction evidence="1">
        <text>(6R)-5,10-methenyltetrahydrofolate + H2O = (6R)-10-formyltetrahydrofolate + H(+)</text>
        <dbReference type="Rhea" id="RHEA:23700"/>
        <dbReference type="ChEBI" id="CHEBI:15377"/>
        <dbReference type="ChEBI" id="CHEBI:15378"/>
        <dbReference type="ChEBI" id="CHEBI:57455"/>
        <dbReference type="ChEBI" id="CHEBI:195366"/>
        <dbReference type="EC" id="3.5.4.9"/>
    </reaction>
</comment>
<comment type="pathway">
    <text evidence="1">One-carbon metabolism; tetrahydrofolate interconversion.</text>
</comment>
<comment type="subunit">
    <text evidence="1">Homodimer.</text>
</comment>
<comment type="similarity">
    <text evidence="1">Belongs to the tetrahydrofolate dehydrogenase/cyclohydrolase family.</text>
</comment>
<organism>
    <name type="scientific">Campylobacter fetus subsp. fetus (strain 82-40)</name>
    <dbReference type="NCBI Taxonomy" id="360106"/>
    <lineage>
        <taxon>Bacteria</taxon>
        <taxon>Pseudomonadati</taxon>
        <taxon>Campylobacterota</taxon>
        <taxon>Epsilonproteobacteria</taxon>
        <taxon>Campylobacterales</taxon>
        <taxon>Campylobacteraceae</taxon>
        <taxon>Campylobacter</taxon>
    </lineage>
</organism>
<evidence type="ECO:0000255" key="1">
    <source>
        <dbReference type="HAMAP-Rule" id="MF_01576"/>
    </source>
</evidence>
<sequence>MQIIDGKSVSAKVKEYVKNEAISLKKSGITPTLAVILVGEDKASQTYVASKEKACLACEMGSVMHRLSKETSQSELLALIEVLNLDDSIDGILVQLPLPKHIDTNRVLEAIDPTKDVDGFHAVNVGKLSSGLDGFVPCTPLGIMELLKEYDVNLQGIDAVVIGRSNIVGKPMASLLLNAGATISIAHSKTKNLPEITRRAKLVVVAVGRPNFLNADMVSDGAIVIDVGINRLDSGKLVGDVDFDSVAPKCSLITPVPGGVGPMTIAMLLSNTLKSAKNRKRNV</sequence>